<organism>
    <name type="scientific">Streptococcus pneumoniae (strain Hungary19A-6)</name>
    <dbReference type="NCBI Taxonomy" id="487214"/>
    <lineage>
        <taxon>Bacteria</taxon>
        <taxon>Bacillati</taxon>
        <taxon>Bacillota</taxon>
        <taxon>Bacilli</taxon>
        <taxon>Lactobacillales</taxon>
        <taxon>Streptococcaceae</taxon>
        <taxon>Streptococcus</taxon>
    </lineage>
</organism>
<accession>B1IAC8</accession>
<comment type="similarity">
    <text evidence="1">Belongs to the universal ribosomal protein uS2 family.</text>
</comment>
<feature type="chain" id="PRO_1000115064" description="Small ribosomal subunit protein uS2">
    <location>
        <begin position="1"/>
        <end position="259"/>
    </location>
</feature>
<name>RS2_STRPI</name>
<reference key="1">
    <citation type="journal article" date="2010" name="Genome Biol.">
        <title>Structure and dynamics of the pan-genome of Streptococcus pneumoniae and closely related species.</title>
        <authorList>
            <person name="Donati C."/>
            <person name="Hiller N.L."/>
            <person name="Tettelin H."/>
            <person name="Muzzi A."/>
            <person name="Croucher N.J."/>
            <person name="Angiuoli S.V."/>
            <person name="Oggioni M."/>
            <person name="Dunning Hotopp J.C."/>
            <person name="Hu F.Z."/>
            <person name="Riley D.R."/>
            <person name="Covacci A."/>
            <person name="Mitchell T.J."/>
            <person name="Bentley S.D."/>
            <person name="Kilian M."/>
            <person name="Ehrlich G.D."/>
            <person name="Rappuoli R."/>
            <person name="Moxon E.R."/>
            <person name="Masignani V."/>
        </authorList>
    </citation>
    <scope>NUCLEOTIDE SEQUENCE [LARGE SCALE GENOMIC DNA]</scope>
    <source>
        <strain>Hungary19A-6</strain>
    </source>
</reference>
<sequence length="259" mass="28827">MAVISMKQLLEAGVHFGHQTRRWNPKMAKYIFTERNGIHVIDLQQTVKYADQAYDFMRDAAANDAVVLFVGTKKQAADAVAEEAVRSGQYFINHRWLGGTLTNWGTIQKRIARLKEIKRMEEDGTFEVLPKKEVALLNKQRARLEKFLGGIEDMPRIPDVMYVVDPHKEQIAVKEAKKLGIPVVAMVDTNTDPDDIDVIIPANDDAIRAVKLITAKLADAIIEGRQGDDAVAVEAEFAASETQADSIEEIVEVVEGDNA</sequence>
<evidence type="ECO:0000255" key="1">
    <source>
        <dbReference type="HAMAP-Rule" id="MF_00291"/>
    </source>
</evidence>
<evidence type="ECO:0000305" key="2"/>
<proteinExistence type="inferred from homology"/>
<gene>
    <name evidence="1" type="primary">rpsB</name>
    <name type="ordered locus">SPH_2410</name>
</gene>
<dbReference type="EMBL" id="CP000936">
    <property type="protein sequence ID" value="ACA37191.1"/>
    <property type="molecule type" value="Genomic_DNA"/>
</dbReference>
<dbReference type="RefSeq" id="WP_000268458.1">
    <property type="nucleotide sequence ID" value="NC_010380.1"/>
</dbReference>
<dbReference type="SMR" id="B1IAC8"/>
<dbReference type="KEGG" id="spv:SPH_2410"/>
<dbReference type="HOGENOM" id="CLU_040318_1_2_9"/>
<dbReference type="Proteomes" id="UP000002163">
    <property type="component" value="Chromosome"/>
</dbReference>
<dbReference type="GO" id="GO:0022627">
    <property type="term" value="C:cytosolic small ribosomal subunit"/>
    <property type="evidence" value="ECO:0007669"/>
    <property type="project" value="TreeGrafter"/>
</dbReference>
<dbReference type="GO" id="GO:0003735">
    <property type="term" value="F:structural constituent of ribosome"/>
    <property type="evidence" value="ECO:0007669"/>
    <property type="project" value="InterPro"/>
</dbReference>
<dbReference type="GO" id="GO:0006412">
    <property type="term" value="P:translation"/>
    <property type="evidence" value="ECO:0007669"/>
    <property type="project" value="UniProtKB-UniRule"/>
</dbReference>
<dbReference type="CDD" id="cd01425">
    <property type="entry name" value="RPS2"/>
    <property type="match status" value="1"/>
</dbReference>
<dbReference type="FunFam" id="1.10.287.610:FF:000001">
    <property type="entry name" value="30S ribosomal protein S2"/>
    <property type="match status" value="1"/>
</dbReference>
<dbReference type="Gene3D" id="3.40.50.10490">
    <property type="entry name" value="Glucose-6-phosphate isomerase like protein, domain 1"/>
    <property type="match status" value="1"/>
</dbReference>
<dbReference type="Gene3D" id="1.10.287.610">
    <property type="entry name" value="Helix hairpin bin"/>
    <property type="match status" value="1"/>
</dbReference>
<dbReference type="HAMAP" id="MF_00291_B">
    <property type="entry name" value="Ribosomal_uS2_B"/>
    <property type="match status" value="1"/>
</dbReference>
<dbReference type="InterPro" id="IPR001865">
    <property type="entry name" value="Ribosomal_uS2"/>
</dbReference>
<dbReference type="InterPro" id="IPR005706">
    <property type="entry name" value="Ribosomal_uS2_bac/mit/plastid"/>
</dbReference>
<dbReference type="InterPro" id="IPR018130">
    <property type="entry name" value="Ribosomal_uS2_CS"/>
</dbReference>
<dbReference type="InterPro" id="IPR023591">
    <property type="entry name" value="Ribosomal_uS2_flav_dom_sf"/>
</dbReference>
<dbReference type="NCBIfam" id="TIGR01011">
    <property type="entry name" value="rpsB_bact"/>
    <property type="match status" value="1"/>
</dbReference>
<dbReference type="PANTHER" id="PTHR12534">
    <property type="entry name" value="30S RIBOSOMAL PROTEIN S2 PROKARYOTIC AND ORGANELLAR"/>
    <property type="match status" value="1"/>
</dbReference>
<dbReference type="PANTHER" id="PTHR12534:SF0">
    <property type="entry name" value="SMALL RIBOSOMAL SUBUNIT PROTEIN US2M"/>
    <property type="match status" value="1"/>
</dbReference>
<dbReference type="Pfam" id="PF00318">
    <property type="entry name" value="Ribosomal_S2"/>
    <property type="match status" value="1"/>
</dbReference>
<dbReference type="PRINTS" id="PR00395">
    <property type="entry name" value="RIBOSOMALS2"/>
</dbReference>
<dbReference type="SUPFAM" id="SSF52313">
    <property type="entry name" value="Ribosomal protein S2"/>
    <property type="match status" value="1"/>
</dbReference>
<dbReference type="PROSITE" id="PS00962">
    <property type="entry name" value="RIBOSOMAL_S2_1"/>
    <property type="match status" value="1"/>
</dbReference>
<protein>
    <recommendedName>
        <fullName evidence="1">Small ribosomal subunit protein uS2</fullName>
    </recommendedName>
    <alternativeName>
        <fullName evidence="2">30S ribosomal protein S2</fullName>
    </alternativeName>
</protein>
<keyword id="KW-0687">Ribonucleoprotein</keyword>
<keyword id="KW-0689">Ribosomal protein</keyword>